<dbReference type="EC" id="2.3.3.13" evidence="1"/>
<dbReference type="EMBL" id="BX548175">
    <property type="protein sequence ID" value="CAE21296.1"/>
    <property type="molecule type" value="Genomic_DNA"/>
</dbReference>
<dbReference type="RefSeq" id="WP_011130493.1">
    <property type="nucleotide sequence ID" value="NC_005071.1"/>
</dbReference>
<dbReference type="SMR" id="Q7TUV5"/>
<dbReference type="KEGG" id="pmt:PMT_1121"/>
<dbReference type="eggNOG" id="COG0119">
    <property type="taxonomic scope" value="Bacteria"/>
</dbReference>
<dbReference type="HOGENOM" id="CLU_022158_0_1_3"/>
<dbReference type="OrthoDB" id="9804858at2"/>
<dbReference type="UniPathway" id="UPA00048">
    <property type="reaction ID" value="UER00070"/>
</dbReference>
<dbReference type="Proteomes" id="UP000001423">
    <property type="component" value="Chromosome"/>
</dbReference>
<dbReference type="GO" id="GO:0005737">
    <property type="term" value="C:cytoplasm"/>
    <property type="evidence" value="ECO:0007669"/>
    <property type="project" value="UniProtKB-SubCell"/>
</dbReference>
<dbReference type="GO" id="GO:0003852">
    <property type="term" value="F:2-isopropylmalate synthase activity"/>
    <property type="evidence" value="ECO:0007669"/>
    <property type="project" value="UniProtKB-UniRule"/>
</dbReference>
<dbReference type="GO" id="GO:0003985">
    <property type="term" value="F:acetyl-CoA C-acetyltransferase activity"/>
    <property type="evidence" value="ECO:0007669"/>
    <property type="project" value="UniProtKB-UniRule"/>
</dbReference>
<dbReference type="GO" id="GO:0030145">
    <property type="term" value="F:manganese ion binding"/>
    <property type="evidence" value="ECO:0007669"/>
    <property type="project" value="UniProtKB-UniRule"/>
</dbReference>
<dbReference type="GO" id="GO:0009098">
    <property type="term" value="P:L-leucine biosynthetic process"/>
    <property type="evidence" value="ECO:0007669"/>
    <property type="project" value="UniProtKB-UniRule"/>
</dbReference>
<dbReference type="CDD" id="cd07940">
    <property type="entry name" value="DRE_TIM_IPMS"/>
    <property type="match status" value="1"/>
</dbReference>
<dbReference type="FunFam" id="1.10.238.260:FF:000001">
    <property type="entry name" value="2-isopropylmalate synthase"/>
    <property type="match status" value="1"/>
</dbReference>
<dbReference type="FunFam" id="3.20.20.70:FF:000010">
    <property type="entry name" value="2-isopropylmalate synthase"/>
    <property type="match status" value="1"/>
</dbReference>
<dbReference type="FunFam" id="3.30.160.270:FF:000001">
    <property type="entry name" value="2-isopropylmalate synthase"/>
    <property type="match status" value="1"/>
</dbReference>
<dbReference type="Gene3D" id="1.10.238.260">
    <property type="match status" value="1"/>
</dbReference>
<dbReference type="Gene3D" id="3.30.160.270">
    <property type="match status" value="1"/>
</dbReference>
<dbReference type="Gene3D" id="3.20.20.70">
    <property type="entry name" value="Aldolase class I"/>
    <property type="match status" value="1"/>
</dbReference>
<dbReference type="HAMAP" id="MF_01025">
    <property type="entry name" value="LeuA_type1"/>
    <property type="match status" value="1"/>
</dbReference>
<dbReference type="InterPro" id="IPR050073">
    <property type="entry name" value="2-IPM_HCS-like"/>
</dbReference>
<dbReference type="InterPro" id="IPR013709">
    <property type="entry name" value="2-isopropylmalate_synth_dimer"/>
</dbReference>
<dbReference type="InterPro" id="IPR002034">
    <property type="entry name" value="AIPM/Hcit_synth_CS"/>
</dbReference>
<dbReference type="InterPro" id="IPR013785">
    <property type="entry name" value="Aldolase_TIM"/>
</dbReference>
<dbReference type="InterPro" id="IPR054691">
    <property type="entry name" value="LeuA/HCS_post-cat"/>
</dbReference>
<dbReference type="InterPro" id="IPR036230">
    <property type="entry name" value="LeuA_allosteric_dom_sf"/>
</dbReference>
<dbReference type="InterPro" id="IPR005671">
    <property type="entry name" value="LeuA_bact_synth"/>
</dbReference>
<dbReference type="InterPro" id="IPR000891">
    <property type="entry name" value="PYR_CT"/>
</dbReference>
<dbReference type="NCBIfam" id="TIGR00973">
    <property type="entry name" value="leuA_bact"/>
    <property type="match status" value="1"/>
</dbReference>
<dbReference type="NCBIfam" id="NF002086">
    <property type="entry name" value="PRK00915.1-3"/>
    <property type="match status" value="1"/>
</dbReference>
<dbReference type="PANTHER" id="PTHR10277:SF9">
    <property type="entry name" value="2-ISOPROPYLMALATE SYNTHASE 1, CHLOROPLASTIC-RELATED"/>
    <property type="match status" value="1"/>
</dbReference>
<dbReference type="PANTHER" id="PTHR10277">
    <property type="entry name" value="HOMOCITRATE SYNTHASE-RELATED"/>
    <property type="match status" value="1"/>
</dbReference>
<dbReference type="Pfam" id="PF22617">
    <property type="entry name" value="HCS_D2"/>
    <property type="match status" value="1"/>
</dbReference>
<dbReference type="Pfam" id="PF00682">
    <property type="entry name" value="HMGL-like"/>
    <property type="match status" value="1"/>
</dbReference>
<dbReference type="Pfam" id="PF08502">
    <property type="entry name" value="LeuA_dimer"/>
    <property type="match status" value="1"/>
</dbReference>
<dbReference type="SMART" id="SM00917">
    <property type="entry name" value="LeuA_dimer"/>
    <property type="match status" value="1"/>
</dbReference>
<dbReference type="SUPFAM" id="SSF110921">
    <property type="entry name" value="2-isopropylmalate synthase LeuA, allosteric (dimerisation) domain"/>
    <property type="match status" value="1"/>
</dbReference>
<dbReference type="SUPFAM" id="SSF51569">
    <property type="entry name" value="Aldolase"/>
    <property type="match status" value="1"/>
</dbReference>
<dbReference type="PROSITE" id="PS00815">
    <property type="entry name" value="AIPM_HOMOCIT_SYNTH_1"/>
    <property type="match status" value="1"/>
</dbReference>
<dbReference type="PROSITE" id="PS00816">
    <property type="entry name" value="AIPM_HOMOCIT_SYNTH_2"/>
    <property type="match status" value="1"/>
</dbReference>
<dbReference type="PROSITE" id="PS50991">
    <property type="entry name" value="PYR_CT"/>
    <property type="match status" value="1"/>
</dbReference>
<reference key="1">
    <citation type="journal article" date="2003" name="Nature">
        <title>Genome divergence in two Prochlorococcus ecotypes reflects oceanic niche differentiation.</title>
        <authorList>
            <person name="Rocap G."/>
            <person name="Larimer F.W."/>
            <person name="Lamerdin J.E."/>
            <person name="Malfatti S."/>
            <person name="Chain P."/>
            <person name="Ahlgren N.A."/>
            <person name="Arellano A."/>
            <person name="Coleman M."/>
            <person name="Hauser L."/>
            <person name="Hess W.R."/>
            <person name="Johnson Z.I."/>
            <person name="Land M.L."/>
            <person name="Lindell D."/>
            <person name="Post A.F."/>
            <person name="Regala W."/>
            <person name="Shah M."/>
            <person name="Shaw S.L."/>
            <person name="Steglich C."/>
            <person name="Sullivan M.B."/>
            <person name="Ting C.S."/>
            <person name="Tolonen A."/>
            <person name="Webb E.A."/>
            <person name="Zinser E.R."/>
            <person name="Chisholm S.W."/>
        </authorList>
    </citation>
    <scope>NUCLEOTIDE SEQUENCE [LARGE SCALE GENOMIC DNA]</scope>
    <source>
        <strain>MIT 9313</strain>
    </source>
</reference>
<evidence type="ECO:0000255" key="1">
    <source>
        <dbReference type="HAMAP-Rule" id="MF_01025"/>
    </source>
</evidence>
<accession>Q7TUV5</accession>
<name>LEU1_PROMM</name>
<proteinExistence type="inferred from homology"/>
<keyword id="KW-0028">Amino-acid biosynthesis</keyword>
<keyword id="KW-0100">Branched-chain amino acid biosynthesis</keyword>
<keyword id="KW-0963">Cytoplasm</keyword>
<keyword id="KW-0432">Leucine biosynthesis</keyword>
<keyword id="KW-0464">Manganese</keyword>
<keyword id="KW-0479">Metal-binding</keyword>
<keyword id="KW-1185">Reference proteome</keyword>
<keyword id="KW-0808">Transferase</keyword>
<sequence>MAKDPGRVLIFDTTLRDGEQSPGASLNLEEKLAIAQQLARLGVDVIEAGFPFASQGDFAAVQRIAQQVGGDEGPIICGLARASRADIKACADAVAPAPRRRIHTFIATSDIHLEHKLRKSRAEVLAIVPEMVAYARSLVDDVEFSCEDAARSDPEFLYEVIEAAIAAGAGTINIPDTVGFTTPSEFGALIAGIDCHVPNMNEAVISVHGHNDLGLAVANFLEAVKSGARQFECTINGIGERAGNAALEELVMALYVRRRYFNPFFGREPDSPTPLTAVRTEEITKTSRLVSNLTGMVVQPNKAIVGSNAFAHESGIHQDGVLKNRLTYEIVDARTVGLSDNRISLGKLSGRSAVRARLEELGYDLTREDLDEAFARFKDLADRKRDITDRDLEAIVSEQVQQSEARFQLRLVQVSCGSSLRPTATVILAQEDGQEQTAAAVGTGPVDAVCRALNALAGEPNELIEFSVKSVTEGIDAMGEVTIRLRRDGQLFSGHSADTDVVVAAAQAFVNALNRLVAGCGRQSLHPQHDAVLADLRSGI</sequence>
<organism>
    <name type="scientific">Prochlorococcus marinus (strain MIT 9313)</name>
    <dbReference type="NCBI Taxonomy" id="74547"/>
    <lineage>
        <taxon>Bacteria</taxon>
        <taxon>Bacillati</taxon>
        <taxon>Cyanobacteriota</taxon>
        <taxon>Cyanophyceae</taxon>
        <taxon>Synechococcales</taxon>
        <taxon>Prochlorococcaceae</taxon>
        <taxon>Prochlorococcus</taxon>
    </lineage>
</organism>
<feature type="chain" id="PRO_0000140370" description="2-isopropylmalate synthase">
    <location>
        <begin position="1"/>
        <end position="540"/>
    </location>
</feature>
<feature type="domain" description="Pyruvate carboxyltransferase" evidence="1">
    <location>
        <begin position="8"/>
        <end position="269"/>
    </location>
</feature>
<feature type="region of interest" description="Regulatory domain" evidence="1">
    <location>
        <begin position="408"/>
        <end position="540"/>
    </location>
</feature>
<feature type="binding site" evidence="1">
    <location>
        <position position="17"/>
    </location>
    <ligand>
        <name>Mn(2+)</name>
        <dbReference type="ChEBI" id="CHEBI:29035"/>
    </ligand>
</feature>
<feature type="binding site" evidence="1">
    <location>
        <position position="208"/>
    </location>
    <ligand>
        <name>Mn(2+)</name>
        <dbReference type="ChEBI" id="CHEBI:29035"/>
    </ligand>
</feature>
<feature type="binding site" evidence="1">
    <location>
        <position position="210"/>
    </location>
    <ligand>
        <name>Mn(2+)</name>
        <dbReference type="ChEBI" id="CHEBI:29035"/>
    </ligand>
</feature>
<feature type="binding site" evidence="1">
    <location>
        <position position="244"/>
    </location>
    <ligand>
        <name>Mn(2+)</name>
        <dbReference type="ChEBI" id="CHEBI:29035"/>
    </ligand>
</feature>
<gene>
    <name evidence="1" type="primary">leuA</name>
    <name type="ordered locus">PMT_1121</name>
</gene>
<comment type="function">
    <text evidence="1">Catalyzes the condensation of the acetyl group of acetyl-CoA with 3-methyl-2-oxobutanoate (2-ketoisovalerate) to form 3-carboxy-3-hydroxy-4-methylpentanoate (2-isopropylmalate).</text>
</comment>
<comment type="catalytic activity">
    <reaction evidence="1">
        <text>3-methyl-2-oxobutanoate + acetyl-CoA + H2O = (2S)-2-isopropylmalate + CoA + H(+)</text>
        <dbReference type="Rhea" id="RHEA:21524"/>
        <dbReference type="ChEBI" id="CHEBI:1178"/>
        <dbReference type="ChEBI" id="CHEBI:11851"/>
        <dbReference type="ChEBI" id="CHEBI:15377"/>
        <dbReference type="ChEBI" id="CHEBI:15378"/>
        <dbReference type="ChEBI" id="CHEBI:57287"/>
        <dbReference type="ChEBI" id="CHEBI:57288"/>
        <dbReference type="EC" id="2.3.3.13"/>
    </reaction>
</comment>
<comment type="cofactor">
    <cofactor evidence="1">
        <name>Mn(2+)</name>
        <dbReference type="ChEBI" id="CHEBI:29035"/>
    </cofactor>
</comment>
<comment type="pathway">
    <text evidence="1">Amino-acid biosynthesis; L-leucine biosynthesis; L-leucine from 3-methyl-2-oxobutanoate: step 1/4.</text>
</comment>
<comment type="subunit">
    <text evidence="1">Homodimer.</text>
</comment>
<comment type="subcellular location">
    <subcellularLocation>
        <location evidence="1">Cytoplasm</location>
    </subcellularLocation>
</comment>
<comment type="similarity">
    <text evidence="1">Belongs to the alpha-IPM synthase/homocitrate synthase family. LeuA type 1 subfamily.</text>
</comment>
<protein>
    <recommendedName>
        <fullName evidence="1">2-isopropylmalate synthase</fullName>
        <ecNumber evidence="1">2.3.3.13</ecNumber>
    </recommendedName>
    <alternativeName>
        <fullName evidence="1">Alpha-IPM synthase</fullName>
    </alternativeName>
    <alternativeName>
        <fullName evidence="1">Alpha-isopropylmalate synthase</fullName>
    </alternativeName>
</protein>